<keyword id="KW-0025">Alternative splicing</keyword>
<keyword id="KW-0963">Cytoplasm</keyword>
<keyword id="KW-1015">Disulfide bond</keyword>
<keyword id="KW-0249">Electron transport</keyword>
<keyword id="KW-0479">Metal-binding</keyword>
<keyword id="KW-0560">Oxidoreductase</keyword>
<keyword id="KW-0676">Redox-active center</keyword>
<keyword id="KW-1185">Reference proteome</keyword>
<keyword id="KW-0813">Transport</keyword>
<keyword id="KW-0862">Zinc</keyword>
<feature type="chain" id="PRO_0000395525" description="Peptide methionine sulfoxide reductase B7">
    <location>
        <begin position="1"/>
        <end position="144"/>
    </location>
</feature>
<feature type="domain" description="MsrB" evidence="2">
    <location>
        <begin position="19"/>
        <end position="140"/>
    </location>
</feature>
<feature type="active site" description="Nucleophile" evidence="2">
    <location>
        <position position="129"/>
    </location>
</feature>
<feature type="binding site" evidence="2">
    <location>
        <position position="58"/>
    </location>
    <ligand>
        <name>Zn(2+)</name>
        <dbReference type="ChEBI" id="CHEBI:29105"/>
    </ligand>
</feature>
<feature type="binding site" evidence="2">
    <location>
        <position position="61"/>
    </location>
    <ligand>
        <name>Zn(2+)</name>
        <dbReference type="ChEBI" id="CHEBI:29105"/>
    </ligand>
</feature>
<feature type="binding site" evidence="2">
    <location>
        <position position="104"/>
    </location>
    <ligand>
        <name>Zn(2+)</name>
        <dbReference type="ChEBI" id="CHEBI:29105"/>
    </ligand>
</feature>
<feature type="binding site" evidence="2">
    <location>
        <position position="107"/>
    </location>
    <ligand>
        <name>Zn(2+)</name>
        <dbReference type="ChEBI" id="CHEBI:29105"/>
    </ligand>
</feature>
<feature type="disulfide bond" description="Redox-active" evidence="1">
    <location>
        <begin position="76"/>
        <end position="129"/>
    </location>
</feature>
<feature type="splice variant" id="VSP_039512" description="In isoform 2." evidence="3">
    <location>
        <begin position="1"/>
        <end position="3"/>
    </location>
</feature>
<proteinExistence type="evidence at transcript level"/>
<evidence type="ECO:0000250" key="1"/>
<evidence type="ECO:0000255" key="2">
    <source>
        <dbReference type="PROSITE-ProRule" id="PRU01126"/>
    </source>
</evidence>
<evidence type="ECO:0000303" key="3">
    <source ref="4"/>
</evidence>
<evidence type="ECO:0000305" key="4"/>
<organism>
    <name type="scientific">Arabidopsis thaliana</name>
    <name type="common">Mouse-ear cress</name>
    <dbReference type="NCBI Taxonomy" id="3702"/>
    <lineage>
        <taxon>Eukaryota</taxon>
        <taxon>Viridiplantae</taxon>
        <taxon>Streptophyta</taxon>
        <taxon>Embryophyta</taxon>
        <taxon>Tracheophyta</taxon>
        <taxon>Spermatophyta</taxon>
        <taxon>Magnoliopsida</taxon>
        <taxon>eudicotyledons</taxon>
        <taxon>Gunneridae</taxon>
        <taxon>Pentapetalae</taxon>
        <taxon>rosids</taxon>
        <taxon>malvids</taxon>
        <taxon>Brassicales</taxon>
        <taxon>Brassicaceae</taxon>
        <taxon>Camelineae</taxon>
        <taxon>Arabidopsis</taxon>
    </lineage>
</organism>
<comment type="function">
    <text evidence="1">Catalyzes the reduction of methionine sulfoxide (MetSO) to methionine in proteins. Plays a protective role against oxidative stress by restoring activity to proteins that have been inactivated by methionine oxidation. MSRB family specifically reduces the MetSO R-enantiomer (By similarity).</text>
</comment>
<comment type="catalytic activity">
    <reaction>
        <text>L-methionyl-[protein] + [thioredoxin]-disulfide + H2O = L-methionyl-(R)-S-oxide-[protein] + [thioredoxin]-dithiol</text>
        <dbReference type="Rhea" id="RHEA:24164"/>
        <dbReference type="Rhea" id="RHEA-COMP:10698"/>
        <dbReference type="Rhea" id="RHEA-COMP:10700"/>
        <dbReference type="Rhea" id="RHEA-COMP:12313"/>
        <dbReference type="Rhea" id="RHEA-COMP:12314"/>
        <dbReference type="ChEBI" id="CHEBI:15377"/>
        <dbReference type="ChEBI" id="CHEBI:16044"/>
        <dbReference type="ChEBI" id="CHEBI:29950"/>
        <dbReference type="ChEBI" id="CHEBI:45764"/>
        <dbReference type="ChEBI" id="CHEBI:50058"/>
        <dbReference type="EC" id="1.8.4.12"/>
    </reaction>
</comment>
<comment type="cofactor">
    <cofactor evidence="1">
        <name>Zn(2+)</name>
        <dbReference type="ChEBI" id="CHEBI:29105"/>
    </cofactor>
    <text evidence="1">Binds 1 zinc ion per subunit.</text>
</comment>
<comment type="subcellular location">
    <subcellularLocation>
        <location evidence="4">Cytoplasm</location>
        <location evidence="4">Cytosol</location>
    </subcellularLocation>
</comment>
<comment type="alternative products">
    <event type="alternative splicing"/>
    <isoform>
        <id>Q8VY86-1</id>
        <name>1</name>
        <sequence type="displayed"/>
    </isoform>
    <isoform>
        <id>Q8VY86-2</id>
        <name>2</name>
        <sequence type="described" ref="VSP_039512"/>
    </isoform>
</comment>
<comment type="similarity">
    <text evidence="4">Belongs to the MsrB Met sulfoxide reductase family.</text>
</comment>
<sequence>MAAMTAAAVPATGSFQKQDEEWRAVLSPEQFRVLRLKGTDKRGKGEFTKKFEEGTYSCAGCGTALYKSTTKFDSGCGWPAFFDAIPGAIKQTPEAGGRRMEITCAVCDGHLGHVFKGEGYSTPTDQRHCVNSVSLKFSSAGSSQ</sequence>
<dbReference type="EC" id="1.8.4.12"/>
<dbReference type="EMBL" id="AL021890">
    <property type="protein sequence ID" value="CAA17150.1"/>
    <property type="molecule type" value="Genomic_DNA"/>
</dbReference>
<dbReference type="EMBL" id="AL161556">
    <property type="protein sequence ID" value="CAB79138.1"/>
    <property type="molecule type" value="Genomic_DNA"/>
</dbReference>
<dbReference type="EMBL" id="CP002687">
    <property type="protein sequence ID" value="AEE84508.1"/>
    <property type="molecule type" value="Genomic_DNA"/>
</dbReference>
<dbReference type="EMBL" id="CP002687">
    <property type="protein sequence ID" value="AEE84509.1"/>
    <property type="molecule type" value="Genomic_DNA"/>
</dbReference>
<dbReference type="EMBL" id="AY072355">
    <property type="protein sequence ID" value="AAL62347.1"/>
    <property type="molecule type" value="mRNA"/>
</dbReference>
<dbReference type="EMBL" id="BT000415">
    <property type="protein sequence ID" value="AAN15734.1"/>
    <property type="molecule type" value="mRNA"/>
</dbReference>
<dbReference type="EMBL" id="AY085336">
    <property type="protein sequence ID" value="AAM62567.1"/>
    <property type="molecule type" value="mRNA"/>
</dbReference>
<dbReference type="PIR" id="T05465">
    <property type="entry name" value="T05465"/>
</dbReference>
<dbReference type="RefSeq" id="NP_001078422.1">
    <molecule id="Q8VY86-2"/>
    <property type="nucleotide sequence ID" value="NM_001084953.1"/>
</dbReference>
<dbReference type="RefSeq" id="NP_567637.1">
    <molecule id="Q8VY86-1"/>
    <property type="nucleotide sequence ID" value="NM_118303.4"/>
</dbReference>
<dbReference type="SMR" id="Q8VY86"/>
<dbReference type="BioGRID" id="13560">
    <property type="interactions" value="4"/>
</dbReference>
<dbReference type="FunCoup" id="Q8VY86">
    <property type="interactions" value="45"/>
</dbReference>
<dbReference type="STRING" id="3702.Q8VY86"/>
<dbReference type="PaxDb" id="3702-AT4G21830.1"/>
<dbReference type="ProteomicsDB" id="239012">
    <molecule id="Q8VY86-1"/>
</dbReference>
<dbReference type="EnsemblPlants" id="AT4G21830.1">
    <molecule id="Q8VY86-1"/>
    <property type="protein sequence ID" value="AT4G21830.1"/>
    <property type="gene ID" value="AT4G21830"/>
</dbReference>
<dbReference type="EnsemblPlants" id="AT4G21830.2">
    <molecule id="Q8VY86-2"/>
    <property type="protein sequence ID" value="AT4G21830.2"/>
    <property type="gene ID" value="AT4G21830"/>
</dbReference>
<dbReference type="GeneID" id="828271"/>
<dbReference type="Gramene" id="AT4G21830.1">
    <molecule id="Q8VY86-1"/>
    <property type="protein sequence ID" value="AT4G21830.1"/>
    <property type="gene ID" value="AT4G21830"/>
</dbReference>
<dbReference type="Gramene" id="AT4G21830.2">
    <molecule id="Q8VY86-2"/>
    <property type="protein sequence ID" value="AT4G21830.2"/>
    <property type="gene ID" value="AT4G21830"/>
</dbReference>
<dbReference type="KEGG" id="ath:AT4G21830"/>
<dbReference type="Araport" id="AT4G21830"/>
<dbReference type="TAIR" id="AT4G21830">
    <property type="gene designation" value="MSRB7"/>
</dbReference>
<dbReference type="eggNOG" id="KOG0856">
    <property type="taxonomic scope" value="Eukaryota"/>
</dbReference>
<dbReference type="InParanoid" id="Q8VY86"/>
<dbReference type="OMA" id="HSDRSWG"/>
<dbReference type="OrthoDB" id="44061at2759"/>
<dbReference type="PhylomeDB" id="Q8VY86"/>
<dbReference type="PRO" id="PR:Q8VY86"/>
<dbReference type="Proteomes" id="UP000006548">
    <property type="component" value="Chromosome 4"/>
</dbReference>
<dbReference type="ExpressionAtlas" id="Q8VY86">
    <property type="expression patterns" value="baseline and differential"/>
</dbReference>
<dbReference type="GO" id="GO:0005829">
    <property type="term" value="C:cytosol"/>
    <property type="evidence" value="ECO:0000304"/>
    <property type="project" value="TAIR"/>
</dbReference>
<dbReference type="GO" id="GO:0046872">
    <property type="term" value="F:metal ion binding"/>
    <property type="evidence" value="ECO:0007669"/>
    <property type="project" value="UniProtKB-KW"/>
</dbReference>
<dbReference type="GO" id="GO:0033743">
    <property type="term" value="F:peptide-methionine (R)-S-oxide reductase activity"/>
    <property type="evidence" value="ECO:0007669"/>
    <property type="project" value="UniProtKB-EC"/>
</dbReference>
<dbReference type="GO" id="GO:0030091">
    <property type="term" value="P:protein repair"/>
    <property type="evidence" value="ECO:0007669"/>
    <property type="project" value="InterPro"/>
</dbReference>
<dbReference type="GO" id="GO:0000304">
    <property type="term" value="P:response to singlet oxygen"/>
    <property type="evidence" value="ECO:0000270"/>
    <property type="project" value="TAIR"/>
</dbReference>
<dbReference type="FunFam" id="2.170.150.20:FF:000009">
    <property type="entry name" value="Peptide-methionine (R)-S-oxide reductase"/>
    <property type="match status" value="1"/>
</dbReference>
<dbReference type="Gene3D" id="2.170.150.20">
    <property type="entry name" value="Peptide methionine sulfoxide reductase"/>
    <property type="match status" value="1"/>
</dbReference>
<dbReference type="InterPro" id="IPR028427">
    <property type="entry name" value="Met_Sox_Rdtase_MsrB"/>
</dbReference>
<dbReference type="InterPro" id="IPR002579">
    <property type="entry name" value="Met_Sox_Rdtase_MsrB_dom"/>
</dbReference>
<dbReference type="InterPro" id="IPR011057">
    <property type="entry name" value="Mss4-like_sf"/>
</dbReference>
<dbReference type="NCBIfam" id="TIGR00357">
    <property type="entry name" value="peptide-methionine (R)-S-oxide reductase MsrB"/>
    <property type="match status" value="1"/>
</dbReference>
<dbReference type="PANTHER" id="PTHR46081">
    <property type="entry name" value="PEPTIDE METHIONINE SULFOXIDE REDUCTASE 2"/>
    <property type="match status" value="1"/>
</dbReference>
<dbReference type="PANTHER" id="PTHR46081:SF3">
    <property type="entry name" value="PEPTIDE METHIONINE SULFOXIDE REDUCTASE B7-RELATED"/>
    <property type="match status" value="1"/>
</dbReference>
<dbReference type="Pfam" id="PF01641">
    <property type="entry name" value="SelR"/>
    <property type="match status" value="1"/>
</dbReference>
<dbReference type="SUPFAM" id="SSF51316">
    <property type="entry name" value="Mss4-like"/>
    <property type="match status" value="1"/>
</dbReference>
<dbReference type="PROSITE" id="PS51790">
    <property type="entry name" value="MSRB"/>
    <property type="match status" value="1"/>
</dbReference>
<protein>
    <recommendedName>
        <fullName>Peptide methionine sulfoxide reductase B7</fullName>
        <shortName>AtMSRB7</shortName>
        <ecNumber>1.8.4.12</ecNumber>
    </recommendedName>
    <alternativeName>
        <fullName>Peptide-methionine (R)-S-oxide reductase</fullName>
    </alternativeName>
</protein>
<accession>Q8VY86</accession>
<accession>O49706</accession>
<reference key="1">
    <citation type="journal article" date="1999" name="Nature">
        <title>Sequence and analysis of chromosome 4 of the plant Arabidopsis thaliana.</title>
        <authorList>
            <person name="Mayer K.F.X."/>
            <person name="Schueller C."/>
            <person name="Wambutt R."/>
            <person name="Murphy G."/>
            <person name="Volckaert G."/>
            <person name="Pohl T."/>
            <person name="Duesterhoeft A."/>
            <person name="Stiekema W."/>
            <person name="Entian K.-D."/>
            <person name="Terryn N."/>
            <person name="Harris B."/>
            <person name="Ansorge W."/>
            <person name="Brandt P."/>
            <person name="Grivell L.A."/>
            <person name="Rieger M."/>
            <person name="Weichselgartner M."/>
            <person name="de Simone V."/>
            <person name="Obermaier B."/>
            <person name="Mache R."/>
            <person name="Mueller M."/>
            <person name="Kreis M."/>
            <person name="Delseny M."/>
            <person name="Puigdomenech P."/>
            <person name="Watson M."/>
            <person name="Schmidtheini T."/>
            <person name="Reichert B."/>
            <person name="Portetelle D."/>
            <person name="Perez-Alonso M."/>
            <person name="Boutry M."/>
            <person name="Bancroft I."/>
            <person name="Vos P."/>
            <person name="Hoheisel J."/>
            <person name="Zimmermann W."/>
            <person name="Wedler H."/>
            <person name="Ridley P."/>
            <person name="Langham S.-A."/>
            <person name="McCullagh B."/>
            <person name="Bilham L."/>
            <person name="Robben J."/>
            <person name="van der Schueren J."/>
            <person name="Grymonprez B."/>
            <person name="Chuang Y.-J."/>
            <person name="Vandenbussche F."/>
            <person name="Braeken M."/>
            <person name="Weltjens I."/>
            <person name="Voet M."/>
            <person name="Bastiaens I."/>
            <person name="Aert R."/>
            <person name="Defoor E."/>
            <person name="Weitzenegger T."/>
            <person name="Bothe G."/>
            <person name="Ramsperger U."/>
            <person name="Hilbert H."/>
            <person name="Braun M."/>
            <person name="Holzer E."/>
            <person name="Brandt A."/>
            <person name="Peters S."/>
            <person name="van Staveren M."/>
            <person name="Dirkse W."/>
            <person name="Mooijman P."/>
            <person name="Klein Lankhorst R."/>
            <person name="Rose M."/>
            <person name="Hauf J."/>
            <person name="Koetter P."/>
            <person name="Berneiser S."/>
            <person name="Hempel S."/>
            <person name="Feldpausch M."/>
            <person name="Lamberth S."/>
            <person name="Van den Daele H."/>
            <person name="De Keyser A."/>
            <person name="Buysshaert C."/>
            <person name="Gielen J."/>
            <person name="Villarroel R."/>
            <person name="De Clercq R."/>
            <person name="van Montagu M."/>
            <person name="Rogers J."/>
            <person name="Cronin A."/>
            <person name="Quail M.A."/>
            <person name="Bray-Allen S."/>
            <person name="Clark L."/>
            <person name="Doggett J."/>
            <person name="Hall S."/>
            <person name="Kay M."/>
            <person name="Lennard N."/>
            <person name="McLay K."/>
            <person name="Mayes R."/>
            <person name="Pettett A."/>
            <person name="Rajandream M.A."/>
            <person name="Lyne M."/>
            <person name="Benes V."/>
            <person name="Rechmann S."/>
            <person name="Borkova D."/>
            <person name="Bloecker H."/>
            <person name="Scharfe M."/>
            <person name="Grimm M."/>
            <person name="Loehnert T.-H."/>
            <person name="Dose S."/>
            <person name="de Haan M."/>
            <person name="Maarse A.C."/>
            <person name="Schaefer M."/>
            <person name="Mueller-Auer S."/>
            <person name="Gabel C."/>
            <person name="Fuchs M."/>
            <person name="Fartmann B."/>
            <person name="Granderath K."/>
            <person name="Dauner D."/>
            <person name="Herzl A."/>
            <person name="Neumann S."/>
            <person name="Argiriou A."/>
            <person name="Vitale D."/>
            <person name="Liguori R."/>
            <person name="Piravandi E."/>
            <person name="Massenet O."/>
            <person name="Quigley F."/>
            <person name="Clabauld G."/>
            <person name="Muendlein A."/>
            <person name="Felber R."/>
            <person name="Schnabl S."/>
            <person name="Hiller R."/>
            <person name="Schmidt W."/>
            <person name="Lecharny A."/>
            <person name="Aubourg S."/>
            <person name="Chefdor F."/>
            <person name="Cooke R."/>
            <person name="Berger C."/>
            <person name="Monfort A."/>
            <person name="Casacuberta E."/>
            <person name="Gibbons T."/>
            <person name="Weber N."/>
            <person name="Vandenbol M."/>
            <person name="Bargues M."/>
            <person name="Terol J."/>
            <person name="Torres A."/>
            <person name="Perez-Perez A."/>
            <person name="Purnelle B."/>
            <person name="Bent E."/>
            <person name="Johnson S."/>
            <person name="Tacon D."/>
            <person name="Jesse T."/>
            <person name="Heijnen L."/>
            <person name="Schwarz S."/>
            <person name="Scholler P."/>
            <person name="Heber S."/>
            <person name="Francs P."/>
            <person name="Bielke C."/>
            <person name="Frishman D."/>
            <person name="Haase D."/>
            <person name="Lemcke K."/>
            <person name="Mewes H.-W."/>
            <person name="Stocker S."/>
            <person name="Zaccaria P."/>
            <person name="Bevan M."/>
            <person name="Wilson R.K."/>
            <person name="de la Bastide M."/>
            <person name="Habermann K."/>
            <person name="Parnell L."/>
            <person name="Dedhia N."/>
            <person name="Gnoj L."/>
            <person name="Schutz K."/>
            <person name="Huang E."/>
            <person name="Spiegel L."/>
            <person name="Sekhon M."/>
            <person name="Murray J."/>
            <person name="Sheet P."/>
            <person name="Cordes M."/>
            <person name="Abu-Threideh J."/>
            <person name="Stoneking T."/>
            <person name="Kalicki J."/>
            <person name="Graves T."/>
            <person name="Harmon G."/>
            <person name="Edwards J."/>
            <person name="Latreille P."/>
            <person name="Courtney L."/>
            <person name="Cloud J."/>
            <person name="Abbott A."/>
            <person name="Scott K."/>
            <person name="Johnson D."/>
            <person name="Minx P."/>
            <person name="Bentley D."/>
            <person name="Fulton B."/>
            <person name="Miller N."/>
            <person name="Greco T."/>
            <person name="Kemp K."/>
            <person name="Kramer J."/>
            <person name="Fulton L."/>
            <person name="Mardis E."/>
            <person name="Dante M."/>
            <person name="Pepin K."/>
            <person name="Hillier L.W."/>
            <person name="Nelson J."/>
            <person name="Spieth J."/>
            <person name="Ryan E."/>
            <person name="Andrews S."/>
            <person name="Geisel C."/>
            <person name="Layman D."/>
            <person name="Du H."/>
            <person name="Ali J."/>
            <person name="Berghoff A."/>
            <person name="Jones K."/>
            <person name="Drone K."/>
            <person name="Cotton M."/>
            <person name="Joshu C."/>
            <person name="Antonoiu B."/>
            <person name="Zidanic M."/>
            <person name="Strong C."/>
            <person name="Sun H."/>
            <person name="Lamar B."/>
            <person name="Yordan C."/>
            <person name="Ma P."/>
            <person name="Zhong J."/>
            <person name="Preston R."/>
            <person name="Vil D."/>
            <person name="Shekher M."/>
            <person name="Matero A."/>
            <person name="Shah R."/>
            <person name="Swaby I.K."/>
            <person name="O'Shaughnessy A."/>
            <person name="Rodriguez M."/>
            <person name="Hoffman J."/>
            <person name="Till S."/>
            <person name="Granat S."/>
            <person name="Shohdy N."/>
            <person name="Hasegawa A."/>
            <person name="Hameed A."/>
            <person name="Lodhi M."/>
            <person name="Johnson A."/>
            <person name="Chen E."/>
            <person name="Marra M.A."/>
            <person name="Martienssen R."/>
            <person name="McCombie W.R."/>
        </authorList>
    </citation>
    <scope>NUCLEOTIDE SEQUENCE [LARGE SCALE GENOMIC DNA]</scope>
    <source>
        <strain>cv. Columbia</strain>
    </source>
</reference>
<reference key="2">
    <citation type="journal article" date="2017" name="Plant J.">
        <title>Araport11: a complete reannotation of the Arabidopsis thaliana reference genome.</title>
        <authorList>
            <person name="Cheng C.Y."/>
            <person name="Krishnakumar V."/>
            <person name="Chan A.P."/>
            <person name="Thibaud-Nissen F."/>
            <person name="Schobel S."/>
            <person name="Town C.D."/>
        </authorList>
    </citation>
    <scope>GENOME REANNOTATION</scope>
    <source>
        <strain>cv. Columbia</strain>
    </source>
</reference>
<reference key="3">
    <citation type="journal article" date="2003" name="Science">
        <title>Empirical analysis of transcriptional activity in the Arabidopsis genome.</title>
        <authorList>
            <person name="Yamada K."/>
            <person name="Lim J."/>
            <person name="Dale J.M."/>
            <person name="Chen H."/>
            <person name="Shinn P."/>
            <person name="Palm C.J."/>
            <person name="Southwick A.M."/>
            <person name="Wu H.C."/>
            <person name="Kim C.J."/>
            <person name="Nguyen M."/>
            <person name="Pham P.K."/>
            <person name="Cheuk R.F."/>
            <person name="Karlin-Newmann G."/>
            <person name="Liu S.X."/>
            <person name="Lam B."/>
            <person name="Sakano H."/>
            <person name="Wu T."/>
            <person name="Yu G."/>
            <person name="Miranda M."/>
            <person name="Quach H.L."/>
            <person name="Tripp M."/>
            <person name="Chang C.H."/>
            <person name="Lee J.M."/>
            <person name="Toriumi M.J."/>
            <person name="Chan M.M."/>
            <person name="Tang C.C."/>
            <person name="Onodera C.S."/>
            <person name="Deng J.M."/>
            <person name="Akiyama K."/>
            <person name="Ansari Y."/>
            <person name="Arakawa T."/>
            <person name="Banh J."/>
            <person name="Banno F."/>
            <person name="Bowser L."/>
            <person name="Brooks S.Y."/>
            <person name="Carninci P."/>
            <person name="Chao Q."/>
            <person name="Choy N."/>
            <person name="Enju A."/>
            <person name="Goldsmith A.D."/>
            <person name="Gurjal M."/>
            <person name="Hansen N.F."/>
            <person name="Hayashizaki Y."/>
            <person name="Johnson-Hopson C."/>
            <person name="Hsuan V.W."/>
            <person name="Iida K."/>
            <person name="Karnes M."/>
            <person name="Khan S."/>
            <person name="Koesema E."/>
            <person name="Ishida J."/>
            <person name="Jiang P.X."/>
            <person name="Jones T."/>
            <person name="Kawai J."/>
            <person name="Kamiya A."/>
            <person name="Meyers C."/>
            <person name="Nakajima M."/>
            <person name="Narusaka M."/>
            <person name="Seki M."/>
            <person name="Sakurai T."/>
            <person name="Satou M."/>
            <person name="Tamse R."/>
            <person name="Vaysberg M."/>
            <person name="Wallender E.K."/>
            <person name="Wong C."/>
            <person name="Yamamura Y."/>
            <person name="Yuan S."/>
            <person name="Shinozaki K."/>
            <person name="Davis R.W."/>
            <person name="Theologis A."/>
            <person name="Ecker J.R."/>
        </authorList>
    </citation>
    <scope>NUCLEOTIDE SEQUENCE [LARGE SCALE MRNA] (ISOFORM 1)</scope>
    <source>
        <strain>cv. Columbia</strain>
    </source>
</reference>
<reference key="4">
    <citation type="submission" date="2002-03" db="EMBL/GenBank/DDBJ databases">
        <title>Full-length cDNA from Arabidopsis thaliana.</title>
        <authorList>
            <person name="Brover V.V."/>
            <person name="Troukhan M.E."/>
            <person name="Alexandrov N.A."/>
            <person name="Lu Y.-P."/>
            <person name="Flavell R.B."/>
            <person name="Feldmann K.A."/>
        </authorList>
    </citation>
    <scope>NUCLEOTIDE SEQUENCE [LARGE SCALE MRNA] (ISOFORM 2)</scope>
</reference>
<reference key="5">
    <citation type="journal article" date="2006" name="Photosyn. Res.">
        <title>Plant methionine sulfoxide reductase A and B multigenic families.</title>
        <authorList>
            <person name="Rouhier N."/>
            <person name="Vieira Dos Santos C."/>
            <person name="Tarrago L."/>
            <person name="Rey P."/>
        </authorList>
    </citation>
    <scope>GENE FAMILY</scope>
    <scope>NOMENCLATURE</scope>
</reference>
<name>MSRB7_ARATH</name>
<gene>
    <name type="primary">MSRB7</name>
    <name type="ordered locus">At4g21830</name>
    <name type="ORF">T8O5.40</name>
</gene>